<gene>
    <name evidence="1" type="primary">glpK</name>
    <name type="ordered locus">Cphy_0041</name>
</gene>
<organism>
    <name type="scientific">Lachnoclostridium phytofermentans (strain ATCC 700394 / DSM 18823 / ISDg)</name>
    <name type="common">Clostridium phytofermentans</name>
    <dbReference type="NCBI Taxonomy" id="357809"/>
    <lineage>
        <taxon>Bacteria</taxon>
        <taxon>Bacillati</taxon>
        <taxon>Bacillota</taxon>
        <taxon>Clostridia</taxon>
        <taxon>Lachnospirales</taxon>
        <taxon>Lachnospiraceae</taxon>
    </lineage>
</organism>
<evidence type="ECO:0000255" key="1">
    <source>
        <dbReference type="HAMAP-Rule" id="MF_00186"/>
    </source>
</evidence>
<feature type="chain" id="PRO_1000077414" description="Glycerol kinase">
    <location>
        <begin position="1"/>
        <end position="499"/>
    </location>
</feature>
<feature type="binding site" evidence="1">
    <location>
        <position position="12"/>
    </location>
    <ligand>
        <name>ADP</name>
        <dbReference type="ChEBI" id="CHEBI:456216"/>
    </ligand>
</feature>
<feature type="binding site" evidence="1">
    <location>
        <position position="12"/>
    </location>
    <ligand>
        <name>ATP</name>
        <dbReference type="ChEBI" id="CHEBI:30616"/>
    </ligand>
</feature>
<feature type="binding site" evidence="1">
    <location>
        <position position="12"/>
    </location>
    <ligand>
        <name>sn-glycerol 3-phosphate</name>
        <dbReference type="ChEBI" id="CHEBI:57597"/>
    </ligand>
</feature>
<feature type="binding site" evidence="1">
    <location>
        <position position="13"/>
    </location>
    <ligand>
        <name>ATP</name>
        <dbReference type="ChEBI" id="CHEBI:30616"/>
    </ligand>
</feature>
<feature type="binding site" evidence="1">
    <location>
        <position position="14"/>
    </location>
    <ligand>
        <name>ATP</name>
        <dbReference type="ChEBI" id="CHEBI:30616"/>
    </ligand>
</feature>
<feature type="binding site" evidence="1">
    <location>
        <position position="16"/>
    </location>
    <ligand>
        <name>ADP</name>
        <dbReference type="ChEBI" id="CHEBI:456216"/>
    </ligand>
</feature>
<feature type="binding site" evidence="1">
    <location>
        <position position="82"/>
    </location>
    <ligand>
        <name>glycerol</name>
        <dbReference type="ChEBI" id="CHEBI:17754"/>
    </ligand>
</feature>
<feature type="binding site" evidence="1">
    <location>
        <position position="82"/>
    </location>
    <ligand>
        <name>sn-glycerol 3-phosphate</name>
        <dbReference type="ChEBI" id="CHEBI:57597"/>
    </ligand>
</feature>
<feature type="binding site" evidence="1">
    <location>
        <position position="83"/>
    </location>
    <ligand>
        <name>glycerol</name>
        <dbReference type="ChEBI" id="CHEBI:17754"/>
    </ligand>
</feature>
<feature type="binding site" evidence="1">
    <location>
        <position position="83"/>
    </location>
    <ligand>
        <name>sn-glycerol 3-phosphate</name>
        <dbReference type="ChEBI" id="CHEBI:57597"/>
    </ligand>
</feature>
<feature type="binding site" evidence="1">
    <location>
        <position position="134"/>
    </location>
    <ligand>
        <name>glycerol</name>
        <dbReference type="ChEBI" id="CHEBI:17754"/>
    </ligand>
</feature>
<feature type="binding site" evidence="1">
    <location>
        <position position="134"/>
    </location>
    <ligand>
        <name>sn-glycerol 3-phosphate</name>
        <dbReference type="ChEBI" id="CHEBI:57597"/>
    </ligand>
</feature>
<feature type="binding site" evidence="1">
    <location>
        <position position="243"/>
    </location>
    <ligand>
        <name>glycerol</name>
        <dbReference type="ChEBI" id="CHEBI:17754"/>
    </ligand>
</feature>
<feature type="binding site" evidence="1">
    <location>
        <position position="243"/>
    </location>
    <ligand>
        <name>sn-glycerol 3-phosphate</name>
        <dbReference type="ChEBI" id="CHEBI:57597"/>
    </ligand>
</feature>
<feature type="binding site" evidence="1">
    <location>
        <position position="244"/>
    </location>
    <ligand>
        <name>glycerol</name>
        <dbReference type="ChEBI" id="CHEBI:17754"/>
    </ligand>
</feature>
<feature type="binding site" evidence="1">
    <location>
        <position position="265"/>
    </location>
    <ligand>
        <name>ADP</name>
        <dbReference type="ChEBI" id="CHEBI:456216"/>
    </ligand>
</feature>
<feature type="binding site" evidence="1">
    <location>
        <position position="265"/>
    </location>
    <ligand>
        <name>ATP</name>
        <dbReference type="ChEBI" id="CHEBI:30616"/>
    </ligand>
</feature>
<feature type="binding site" evidence="1">
    <location>
        <position position="308"/>
    </location>
    <ligand>
        <name>ADP</name>
        <dbReference type="ChEBI" id="CHEBI:456216"/>
    </ligand>
</feature>
<feature type="binding site" evidence="1">
    <location>
        <position position="308"/>
    </location>
    <ligand>
        <name>ATP</name>
        <dbReference type="ChEBI" id="CHEBI:30616"/>
    </ligand>
</feature>
<feature type="binding site" evidence="1">
    <location>
        <position position="312"/>
    </location>
    <ligand>
        <name>ATP</name>
        <dbReference type="ChEBI" id="CHEBI:30616"/>
    </ligand>
</feature>
<feature type="binding site" evidence="1">
    <location>
        <position position="409"/>
    </location>
    <ligand>
        <name>ADP</name>
        <dbReference type="ChEBI" id="CHEBI:456216"/>
    </ligand>
</feature>
<feature type="binding site" evidence="1">
    <location>
        <position position="409"/>
    </location>
    <ligand>
        <name>ATP</name>
        <dbReference type="ChEBI" id="CHEBI:30616"/>
    </ligand>
</feature>
<feature type="binding site" evidence="1">
    <location>
        <position position="413"/>
    </location>
    <ligand>
        <name>ADP</name>
        <dbReference type="ChEBI" id="CHEBI:456216"/>
    </ligand>
</feature>
<proteinExistence type="inferred from homology"/>
<accession>A9KQC2</accession>
<protein>
    <recommendedName>
        <fullName evidence="1">Glycerol kinase</fullName>
        <ecNumber evidence="1">2.7.1.30</ecNumber>
    </recommendedName>
    <alternativeName>
        <fullName evidence="1">ATP:glycerol 3-phosphotransferase</fullName>
    </alternativeName>
    <alternativeName>
        <fullName evidence="1">Glycerokinase</fullName>
        <shortName evidence="1">GK</shortName>
    </alternativeName>
</protein>
<dbReference type="EC" id="2.7.1.30" evidence="1"/>
<dbReference type="EMBL" id="CP000885">
    <property type="protein sequence ID" value="ABX40431.1"/>
    <property type="molecule type" value="Genomic_DNA"/>
</dbReference>
<dbReference type="RefSeq" id="WP_012198074.1">
    <property type="nucleotide sequence ID" value="NC_010001.1"/>
</dbReference>
<dbReference type="SMR" id="A9KQC2"/>
<dbReference type="STRING" id="357809.Cphy_0041"/>
<dbReference type="KEGG" id="cpy:Cphy_0041"/>
<dbReference type="eggNOG" id="COG0554">
    <property type="taxonomic scope" value="Bacteria"/>
</dbReference>
<dbReference type="HOGENOM" id="CLU_009281_2_3_9"/>
<dbReference type="OrthoDB" id="9805576at2"/>
<dbReference type="UniPathway" id="UPA00618">
    <property type="reaction ID" value="UER00672"/>
</dbReference>
<dbReference type="Proteomes" id="UP000000370">
    <property type="component" value="Chromosome"/>
</dbReference>
<dbReference type="GO" id="GO:0005829">
    <property type="term" value="C:cytosol"/>
    <property type="evidence" value="ECO:0007669"/>
    <property type="project" value="TreeGrafter"/>
</dbReference>
<dbReference type="GO" id="GO:0005524">
    <property type="term" value="F:ATP binding"/>
    <property type="evidence" value="ECO:0007669"/>
    <property type="project" value="UniProtKB-UniRule"/>
</dbReference>
<dbReference type="GO" id="GO:0004370">
    <property type="term" value="F:glycerol kinase activity"/>
    <property type="evidence" value="ECO:0000250"/>
    <property type="project" value="UniProtKB"/>
</dbReference>
<dbReference type="GO" id="GO:0019563">
    <property type="term" value="P:glycerol catabolic process"/>
    <property type="evidence" value="ECO:0007669"/>
    <property type="project" value="UniProtKB-UniRule"/>
</dbReference>
<dbReference type="GO" id="GO:0006071">
    <property type="term" value="P:glycerol metabolic process"/>
    <property type="evidence" value="ECO:0000250"/>
    <property type="project" value="UniProtKB"/>
</dbReference>
<dbReference type="GO" id="GO:0006072">
    <property type="term" value="P:glycerol-3-phosphate metabolic process"/>
    <property type="evidence" value="ECO:0007669"/>
    <property type="project" value="InterPro"/>
</dbReference>
<dbReference type="CDD" id="cd07786">
    <property type="entry name" value="FGGY_EcGK_like"/>
    <property type="match status" value="1"/>
</dbReference>
<dbReference type="FunFam" id="3.30.420.40:FF:000007">
    <property type="entry name" value="Glycerol kinase"/>
    <property type="match status" value="1"/>
</dbReference>
<dbReference type="FunFam" id="3.30.420.40:FF:000008">
    <property type="entry name" value="Glycerol kinase"/>
    <property type="match status" value="1"/>
</dbReference>
<dbReference type="Gene3D" id="3.30.420.40">
    <property type="match status" value="2"/>
</dbReference>
<dbReference type="HAMAP" id="MF_00186">
    <property type="entry name" value="Glycerol_kin"/>
    <property type="match status" value="1"/>
</dbReference>
<dbReference type="InterPro" id="IPR043129">
    <property type="entry name" value="ATPase_NBD"/>
</dbReference>
<dbReference type="InterPro" id="IPR000577">
    <property type="entry name" value="Carb_kinase_FGGY"/>
</dbReference>
<dbReference type="InterPro" id="IPR018483">
    <property type="entry name" value="Carb_kinase_FGGY_CS"/>
</dbReference>
<dbReference type="InterPro" id="IPR018485">
    <property type="entry name" value="FGGY_C"/>
</dbReference>
<dbReference type="InterPro" id="IPR018484">
    <property type="entry name" value="FGGY_N"/>
</dbReference>
<dbReference type="InterPro" id="IPR005999">
    <property type="entry name" value="Glycerol_kin"/>
</dbReference>
<dbReference type="NCBIfam" id="TIGR01311">
    <property type="entry name" value="glycerol_kin"/>
    <property type="match status" value="1"/>
</dbReference>
<dbReference type="NCBIfam" id="NF000756">
    <property type="entry name" value="PRK00047.1"/>
    <property type="match status" value="1"/>
</dbReference>
<dbReference type="PANTHER" id="PTHR10196:SF69">
    <property type="entry name" value="GLYCEROL KINASE"/>
    <property type="match status" value="1"/>
</dbReference>
<dbReference type="PANTHER" id="PTHR10196">
    <property type="entry name" value="SUGAR KINASE"/>
    <property type="match status" value="1"/>
</dbReference>
<dbReference type="Pfam" id="PF02782">
    <property type="entry name" value="FGGY_C"/>
    <property type="match status" value="1"/>
</dbReference>
<dbReference type="Pfam" id="PF00370">
    <property type="entry name" value="FGGY_N"/>
    <property type="match status" value="1"/>
</dbReference>
<dbReference type="PIRSF" id="PIRSF000538">
    <property type="entry name" value="GlpK"/>
    <property type="match status" value="1"/>
</dbReference>
<dbReference type="SUPFAM" id="SSF53067">
    <property type="entry name" value="Actin-like ATPase domain"/>
    <property type="match status" value="2"/>
</dbReference>
<dbReference type="PROSITE" id="PS00933">
    <property type="entry name" value="FGGY_KINASES_1"/>
    <property type="match status" value="1"/>
</dbReference>
<dbReference type="PROSITE" id="PS00445">
    <property type="entry name" value="FGGY_KINASES_2"/>
    <property type="match status" value="1"/>
</dbReference>
<name>GLPK_LACP7</name>
<reference key="1">
    <citation type="submission" date="2007-11" db="EMBL/GenBank/DDBJ databases">
        <title>Complete genome sequence of Clostridium phytofermentans ISDg.</title>
        <authorList>
            <person name="Leschine S.B."/>
            <person name="Warnick T.A."/>
            <person name="Blanchard J.L."/>
            <person name="Schnell D.J."/>
            <person name="Petit E.L."/>
            <person name="LaTouf W.G."/>
            <person name="Copeland A."/>
            <person name="Lucas S."/>
            <person name="Lapidus A."/>
            <person name="Barry K."/>
            <person name="Glavina del Rio T."/>
            <person name="Dalin E."/>
            <person name="Tice H."/>
            <person name="Pitluck S."/>
            <person name="Kiss H."/>
            <person name="Brettin T."/>
            <person name="Bruce D."/>
            <person name="Detter J.C."/>
            <person name="Han C."/>
            <person name="Kuske C."/>
            <person name="Schmutz J."/>
            <person name="Larimer F."/>
            <person name="Land M."/>
            <person name="Hauser L."/>
            <person name="Kyrpides N."/>
            <person name="Kim E.A."/>
            <person name="Richardson P."/>
        </authorList>
    </citation>
    <scope>NUCLEOTIDE SEQUENCE [LARGE SCALE GENOMIC DNA]</scope>
    <source>
        <strain>ATCC 700394 / DSM 18823 / ISDg</strain>
    </source>
</reference>
<keyword id="KW-0067">ATP-binding</keyword>
<keyword id="KW-0319">Glycerol metabolism</keyword>
<keyword id="KW-0418">Kinase</keyword>
<keyword id="KW-0547">Nucleotide-binding</keyword>
<keyword id="KW-1185">Reference proteome</keyword>
<keyword id="KW-0808">Transferase</keyword>
<comment type="function">
    <text evidence="1">Key enzyme in the regulation of glycerol uptake and metabolism. Catalyzes the phosphorylation of glycerol to yield sn-glycerol 3-phosphate.</text>
</comment>
<comment type="catalytic activity">
    <reaction evidence="1">
        <text>glycerol + ATP = sn-glycerol 3-phosphate + ADP + H(+)</text>
        <dbReference type="Rhea" id="RHEA:21644"/>
        <dbReference type="ChEBI" id="CHEBI:15378"/>
        <dbReference type="ChEBI" id="CHEBI:17754"/>
        <dbReference type="ChEBI" id="CHEBI:30616"/>
        <dbReference type="ChEBI" id="CHEBI:57597"/>
        <dbReference type="ChEBI" id="CHEBI:456216"/>
        <dbReference type="EC" id="2.7.1.30"/>
    </reaction>
</comment>
<comment type="activity regulation">
    <text evidence="1">Activated by phosphorylation and inhibited by fructose 1,6-bisphosphate (FBP).</text>
</comment>
<comment type="pathway">
    <text evidence="1">Polyol metabolism; glycerol degradation via glycerol kinase pathway; sn-glycerol 3-phosphate from glycerol: step 1/1.</text>
</comment>
<comment type="subunit">
    <text evidence="1">Homotetramer and homodimer (in equilibrium).</text>
</comment>
<comment type="similarity">
    <text evidence="1">Belongs to the FGGY kinase family.</text>
</comment>
<sequence>MEKYIMALDQGTTSSRCILFNQRGEVCSVAQKEFTQVYPRTGWVEHRPMDIWSSQISVAAEAMAAIGAKAEDIDSIGITNQRETTIVWDKNTGEPVYNAIVWQCHRTADMIEQLKKDGFDSVIRKKTGLIPDAYFSATKIKWILDNVDGVRERAEAGSLLFGTVDTWIIWNLTKGRVHVTDYTNASRTMLFDIHNLCWDDEILTYFKIPKSMLPKVQASSSIFGHTEEGLLGGEILISGAAGDQQAALFGQCCFEPGEVKNTYGTGCFLLMNTGDTAIESQNGLLTTIAAGDAGHIEYALEGSVFVAGAAIQWLRDEQRMIKKASQSEEYAKEVEDTNGVYVVPAFTGLGAPYWNPYARGTIVGITRGFSKEHMIRATLESLAYQTVNVLHAMEQDSNISLKSLRVDGGASANNFLMQFQADVLNTLVYRPQCIETTALGAAYLAGLATGYFKDRNEIKDNWTLGGTFSPQMDEQKRKELLKGWKRAVRCALAWAEDIE</sequence>